<organism>
    <name type="scientific">Homo sapiens</name>
    <name type="common">Human</name>
    <dbReference type="NCBI Taxonomy" id="9606"/>
    <lineage>
        <taxon>Eukaryota</taxon>
        <taxon>Metazoa</taxon>
        <taxon>Chordata</taxon>
        <taxon>Craniata</taxon>
        <taxon>Vertebrata</taxon>
        <taxon>Euteleostomi</taxon>
        <taxon>Mammalia</taxon>
        <taxon>Eutheria</taxon>
        <taxon>Euarchontoglires</taxon>
        <taxon>Primates</taxon>
        <taxon>Haplorrhini</taxon>
        <taxon>Catarrhini</taxon>
        <taxon>Hominidae</taxon>
        <taxon>Homo</taxon>
    </lineage>
</organism>
<protein>
    <recommendedName>
        <fullName>RNA-binding E3 ubiquitin-protein ligase MEX3C</fullName>
        <ecNumber>2.3.2.27</ecNumber>
    </recommendedName>
    <alternativeName>
        <fullName>RING finger and KH domain-containing protein 2</fullName>
    </alternativeName>
    <alternativeName>
        <fullName>RING finger protein 194</fullName>
    </alternativeName>
    <alternativeName>
        <fullName evidence="8">RING-type E3 ubiquitin transferase MEX3C</fullName>
    </alternativeName>
</protein>
<comment type="function">
    <text evidence="6 7">E3 ubiquitin ligase responsible for the post-transcriptional regulation of common HLA-A allotypes. Binds to the 3' UTR of HLA-A2 mRNA, and regulates its levels by promoting mRNA decay. RNA binding is sufficient to prevent translation, but ubiquitin ligase activity is required for mRNA degradation.</text>
</comment>
<comment type="catalytic activity">
    <reaction>
        <text>S-ubiquitinyl-[E2 ubiquitin-conjugating enzyme]-L-cysteine + [acceptor protein]-L-lysine = [E2 ubiquitin-conjugating enzyme]-L-cysteine + N(6)-ubiquitinyl-[acceptor protein]-L-lysine.</text>
        <dbReference type="EC" id="2.3.2.27"/>
    </reaction>
</comment>
<comment type="subunit">
    <text evidence="6">Interacts with USP7, which antagonizes the ability to degrade mRNA.</text>
</comment>
<comment type="interaction">
    <interactant intactId="EBI-2864451">
        <id>Q5U5Q3</id>
    </interactant>
    <interactant intactId="EBI-925990">
        <id>Q13761</id>
        <label>RUNX3</label>
    </interactant>
    <organismsDiffer>false</organismsDiffer>
    <experiments>4</experiments>
</comment>
<comment type="interaction">
    <interactant intactId="EBI-2864451">
        <id>Q5U5Q3</id>
    </interactant>
    <interactant intactId="EBI-302474">
        <id>Q93009</id>
        <label>USP7</label>
    </interactant>
    <organismsDiffer>false</organismsDiffer>
    <experiments>3</experiments>
</comment>
<comment type="interaction">
    <interactant intactId="EBI-2864451">
        <id>Q5U5Q3</id>
    </interactant>
    <interactant intactId="EBI-356498">
        <id>P62258</id>
        <label>YWHAE</label>
    </interactant>
    <organismsDiffer>false</organismsDiffer>
    <experiments>3</experiments>
</comment>
<comment type="subcellular location">
    <subcellularLocation>
        <location evidence="5">Cytoplasm</location>
    </subcellularLocation>
    <subcellularLocation>
        <location evidence="5">Nucleus</location>
    </subcellularLocation>
    <text>Predominantly expressed in the cytoplasm and shuttles between the cytoplasm and the nucleus through the CRM1 export pathway. May act as suppressor of replication stress and chromosome missegregation.</text>
</comment>
<comment type="tissue specificity">
    <text evidence="5 6">Highest levels found in fetal brain and testis. Also expressed in thymus, salivary gland and uterus. Highly expressed in cells of the innate immune system, in particular activated NK cells. Week expression in the intestine.</text>
</comment>
<comment type="domain">
    <text>Binds RNA through its KH domains.</text>
</comment>
<comment type="disease">
    <text evidence="4">Genetic variations in MEX3C may be associated with susceptibility to essential hypertension.</text>
</comment>
<comment type="sequence caution" evidence="8">
    <conflict type="erroneous termination">
        <sequence resource="EMBL-CDS" id="AAF64269"/>
    </conflict>
    <text>Truncated C-terminus.</text>
</comment>
<comment type="sequence caution" evidence="8">
    <conflict type="frameshift">
        <sequence resource="EMBL-CDS" id="AAF64269"/>
    </conflict>
</comment>
<sequence length="659" mass="69366">MPSGSSAALALAAAPAPLPQPPPPPPPPPPPLPPPSGGPELEGDGLLLRERLAALGLDDPSPAEPGAPALRAPAAAAQGQARRAAELSPEERAPPGRPGAPEAAELELEEDEEEGEEAELDGDLLEEEELEEAEEEDRSSLLLLSPPAATASQTQQIPGGSLGSVLLPAARFDAREAAAAAAAAGVLYGGDDAQGMMAAMLSHAYGPGGCGAAAAALNGEQAALLRRKSVNTTECVPVPSSEHVAEIVGRQGCKIKALRAKTNTYIKTPVRGEEPIFVVTGRKEDVAMAKREILSAAEHFSMIRASRNKNGPALGGLSCSPNLPGQTTVQVRVPYRVVGLVVGPKGATIKRIQQQTHTYIVTPSRDKEPVFEVTGMPENVDRAREEIEMHIAMRTGNYIELNEENDFHYNGTDVSFEGGTLGSAWLSSNPVPPSRARMISNYRNDSSSSLGSGSTDSYFGSNRLADFSPTSPFSTGNFWFGDTLPSVGSEDLAVDSPAFDSLPTSAQTIWTPFEPVNPLSGFGSDPSGNMKTQRRGSQPSTPRLSPTFPESIEHPLARRVRSDPPSTGNHVGLPIYIPAFSNGTNSYSSSNGGSTSSSPPESRRKHDCVICFENEVIAALVPCGHNLFCMECANKICEKRTPSCPVCQTAVTQAIQIHS</sequence>
<keyword id="KW-0002">3D-structure</keyword>
<keyword id="KW-0963">Cytoplasm</keyword>
<keyword id="KW-0479">Metal-binding</keyword>
<keyword id="KW-0539">Nucleus</keyword>
<keyword id="KW-0597">Phosphoprotein</keyword>
<keyword id="KW-1267">Proteomics identification</keyword>
<keyword id="KW-1185">Reference proteome</keyword>
<keyword id="KW-0677">Repeat</keyword>
<keyword id="KW-0694">RNA-binding</keyword>
<keyword id="KW-0808">Transferase</keyword>
<keyword id="KW-0833">Ubl conjugation pathway</keyword>
<keyword id="KW-0862">Zinc</keyword>
<keyword id="KW-0863">Zinc-finger</keyword>
<accession>Q5U5Q3</accession>
<accession>A1L022</accession>
<accession>Q9NZE3</accession>
<reference key="1">
    <citation type="journal article" date="2007" name="Nucleic Acids Res.">
        <title>Identification and characterization of human Mex-3 proteins, a novel family of evolutionarily conserved RNA-binding proteins differentially localized to processing bodies.</title>
        <authorList>
            <person name="Buchet-Poyau K."/>
            <person name="Courchet J."/>
            <person name="Le Hir H."/>
            <person name="Seraphin B."/>
            <person name="Scoazec J.-Y."/>
            <person name="Duret L."/>
            <person name="Domon-Dell C."/>
            <person name="Freund J.-N."/>
            <person name="Billaud M."/>
        </authorList>
    </citation>
    <scope>NUCLEOTIDE SEQUENCE [MRNA]</scope>
    <scope>TISSUE SPECIFICITY</scope>
    <scope>SUBCELLULAR LOCATION</scope>
    <scope>MUTAGENESIS OF GLY-343</scope>
    <scope>PHOSPHORYLATION</scope>
</reference>
<reference key="2">
    <citation type="journal article" date="2005" name="Nature">
        <title>DNA sequence and analysis of human chromosome 18.</title>
        <authorList>
            <person name="Nusbaum C."/>
            <person name="Zody M.C."/>
            <person name="Borowsky M.L."/>
            <person name="Kamal M."/>
            <person name="Kodira C.D."/>
            <person name="Taylor T.D."/>
            <person name="Whittaker C.A."/>
            <person name="Chang J.L."/>
            <person name="Cuomo C.A."/>
            <person name="Dewar K."/>
            <person name="FitzGerald M.G."/>
            <person name="Yang X."/>
            <person name="Abouelleil A."/>
            <person name="Allen N.R."/>
            <person name="Anderson S."/>
            <person name="Bloom T."/>
            <person name="Bugalter B."/>
            <person name="Butler J."/>
            <person name="Cook A."/>
            <person name="DeCaprio D."/>
            <person name="Engels R."/>
            <person name="Garber M."/>
            <person name="Gnirke A."/>
            <person name="Hafez N."/>
            <person name="Hall J.L."/>
            <person name="Norman C.H."/>
            <person name="Itoh T."/>
            <person name="Jaffe D.B."/>
            <person name="Kuroki Y."/>
            <person name="Lehoczky J."/>
            <person name="Lui A."/>
            <person name="Macdonald P."/>
            <person name="Mauceli E."/>
            <person name="Mikkelsen T.S."/>
            <person name="Naylor J.W."/>
            <person name="Nicol R."/>
            <person name="Nguyen C."/>
            <person name="Noguchi H."/>
            <person name="O'Leary S.B."/>
            <person name="Piqani B."/>
            <person name="Smith C.L."/>
            <person name="Talamas J.A."/>
            <person name="Topham K."/>
            <person name="Totoki Y."/>
            <person name="Toyoda A."/>
            <person name="Wain H.M."/>
            <person name="Young S.K."/>
            <person name="Zeng Q."/>
            <person name="Zimmer A.R."/>
            <person name="Fujiyama A."/>
            <person name="Hattori M."/>
            <person name="Birren B.W."/>
            <person name="Sakaki Y."/>
            <person name="Lander E.S."/>
        </authorList>
    </citation>
    <scope>NUCLEOTIDE SEQUENCE [LARGE SCALE GENOMIC DNA]</scope>
</reference>
<reference key="3">
    <citation type="journal article" date="2004" name="Genome Res.">
        <title>The status, quality, and expansion of the NIH full-length cDNA project: the Mammalian Gene Collection (MGC).</title>
        <authorList>
            <consortium name="The MGC Project Team"/>
        </authorList>
    </citation>
    <scope>NUCLEOTIDE SEQUENCE [LARGE SCALE MRNA] OF 451-659</scope>
    <source>
        <tissue>Lung</tissue>
    </source>
</reference>
<reference key="4">
    <citation type="submission" date="1999-11" db="EMBL/GenBank/DDBJ databases">
        <title>A novel gene expressed in human bone marrow.</title>
        <authorList>
            <person name="Zhao M."/>
            <person name="Song H."/>
            <person name="Li N."/>
            <person name="Peng Y."/>
            <person name="Han Z."/>
            <person name="Chen Z."/>
        </authorList>
    </citation>
    <scope>NUCLEOTIDE SEQUENCE [LARGE SCALE MRNA] OF 508-659</scope>
    <source>
        <tissue>Bone marrow</tissue>
    </source>
</reference>
<reference key="5">
    <citation type="journal article" date="2006" name="Hypertension">
        <title>Implication of chromosome 18 in hypertension by sibling pair and association analyses: putative involvement of the RKHD2 gene.</title>
        <authorList>
            <person name="Guzman B."/>
            <person name="Cormand B."/>
            <person name="Ribases M."/>
            <person name="Gonzalez-Nunez D."/>
            <person name="Botey A."/>
            <person name="Poch E."/>
        </authorList>
    </citation>
    <scope>POSSIBLE INVOLVEMENT IN SUSCEPTIBILITY TO ESSENTIAL HYPERTENSION</scope>
</reference>
<reference key="6">
    <citation type="journal article" date="2011" name="Sci. Signal.">
        <title>System-wide temporal characterization of the proteome and phosphoproteome of human embryonic stem cell differentiation.</title>
        <authorList>
            <person name="Rigbolt K.T."/>
            <person name="Prokhorova T.A."/>
            <person name="Akimov V."/>
            <person name="Henningsen J."/>
            <person name="Johansen P.T."/>
            <person name="Kratchmarova I."/>
            <person name="Kassem M."/>
            <person name="Mann M."/>
            <person name="Olsen J.V."/>
            <person name="Blagoev B."/>
        </authorList>
    </citation>
    <scope>IDENTIFICATION BY MASS SPECTROMETRY [LARGE SCALE ANALYSIS]</scope>
</reference>
<reference key="7">
    <citation type="journal article" date="2012" name="EMBO J.">
        <title>The RNA-binding E3 ubiquitin ligase MEX-3C links ubiquitination with MHC-I mRNA degradation.</title>
        <authorList>
            <person name="Cano F."/>
            <person name="Bye H."/>
            <person name="Duncan L.M."/>
            <person name="Buchet-Poyau K."/>
            <person name="Billaud M."/>
            <person name="Wills M.R."/>
            <person name="Lehner P.J."/>
        </authorList>
    </citation>
    <scope>FUNCTION</scope>
    <scope>TISSUE SPECIFICITY</scope>
    <scope>INTERACTION WITH USP7</scope>
</reference>
<reference key="8">
    <citation type="journal article" date="2013" name="J. Proteome Res.">
        <title>Toward a comprehensive characterization of a human cancer cell phosphoproteome.</title>
        <authorList>
            <person name="Zhou H."/>
            <person name="Di Palma S."/>
            <person name="Preisinger C."/>
            <person name="Peng M."/>
            <person name="Polat A.N."/>
            <person name="Heck A.J."/>
            <person name="Mohammed S."/>
        </authorList>
    </citation>
    <scope>PHOSPHORYLATION [LARGE SCALE ANALYSIS] AT SER-88; SER-537 AND SER-545</scope>
    <scope>IDENTIFICATION BY MASS SPECTROMETRY [LARGE SCALE ANALYSIS]</scope>
    <source>
        <tissue>Cervix carcinoma</tissue>
    </source>
</reference>
<reference key="9">
    <citation type="journal article" date="2013" name="Nature">
        <title>Replication stress links structural and numerical cancer chromosomal instability.</title>
        <authorList>
            <person name="Burrell R.A."/>
            <person name="McClelland S.E."/>
            <person name="Endesfelder D."/>
            <person name="Groth P."/>
            <person name="Weller M.C."/>
            <person name="Shaikh N."/>
            <person name="Domingo E."/>
            <person name="Kanu N."/>
            <person name="Dewhurst S.M."/>
            <person name="Gronroos E."/>
            <person name="Chew S.K."/>
            <person name="Rowan A.J."/>
            <person name="Schenk A."/>
            <person name="Sheffer M."/>
            <person name="Howell M."/>
            <person name="Kschischo M."/>
            <person name="Behrens A."/>
            <person name="Helleday T."/>
            <person name="Bartek J."/>
            <person name="Tomlinson I.P."/>
            <person name="Swanton C."/>
        </authorList>
    </citation>
    <scope>FUNCTION</scope>
</reference>
<feature type="chain" id="PRO_0000278782" description="RNA-binding E3 ubiquitin-protein ligase MEX3C">
    <location>
        <begin position="1"/>
        <end position="659"/>
    </location>
</feature>
<feature type="domain" description="KH 1" evidence="1">
    <location>
        <begin position="232"/>
        <end position="293"/>
    </location>
</feature>
<feature type="domain" description="KH 2" evidence="1">
    <location>
        <begin position="326"/>
        <end position="387"/>
    </location>
</feature>
<feature type="zinc finger region" description="RING-type" evidence="2">
    <location>
        <begin position="608"/>
        <end position="648"/>
    </location>
</feature>
<feature type="region of interest" description="Disordered" evidence="3">
    <location>
        <begin position="1"/>
        <end position="140"/>
    </location>
</feature>
<feature type="region of interest" description="Disordered" evidence="3">
    <location>
        <begin position="513"/>
        <end position="569"/>
    </location>
</feature>
<feature type="compositionally biased region" description="Low complexity" evidence="3">
    <location>
        <begin position="1"/>
        <end position="15"/>
    </location>
</feature>
<feature type="compositionally biased region" description="Pro residues" evidence="3">
    <location>
        <begin position="16"/>
        <end position="37"/>
    </location>
</feature>
<feature type="compositionally biased region" description="Low complexity" evidence="3">
    <location>
        <begin position="64"/>
        <end position="82"/>
    </location>
</feature>
<feature type="compositionally biased region" description="Basic and acidic residues" evidence="3">
    <location>
        <begin position="83"/>
        <end position="94"/>
    </location>
</feature>
<feature type="compositionally biased region" description="Acidic residues" evidence="3">
    <location>
        <begin position="104"/>
        <end position="137"/>
    </location>
</feature>
<feature type="compositionally biased region" description="Polar residues" evidence="3">
    <location>
        <begin position="526"/>
        <end position="544"/>
    </location>
</feature>
<feature type="compositionally biased region" description="Basic and acidic residues" evidence="3">
    <location>
        <begin position="551"/>
        <end position="562"/>
    </location>
</feature>
<feature type="modified residue" description="Phosphoserine" evidence="9">
    <location>
        <position position="88"/>
    </location>
</feature>
<feature type="modified residue" description="Phosphoserine" evidence="9">
    <location>
        <position position="537"/>
    </location>
</feature>
<feature type="modified residue" description="Phosphoserine" evidence="9">
    <location>
        <position position="545"/>
    </location>
</feature>
<feature type="sequence variant" id="VAR_030832" description="In dbSNP:rs12970605.">
    <original>T</original>
    <variation>P</variation>
    <location>
        <position position="412"/>
    </location>
</feature>
<feature type="mutagenesis site" description="Prevents RNA binding." evidence="5">
    <original>G</original>
    <variation>D</variation>
    <location>
        <position position="343"/>
    </location>
</feature>
<feature type="sequence conflict" description="In Ref. 4; AAF64269." evidence="8" ref="4">
    <original>I</original>
    <variation>M</variation>
    <location>
        <position position="509"/>
    </location>
</feature>
<feature type="sequence conflict" description="In Ref. 4; AAF64269." evidence="8" ref="4">
    <original>L</original>
    <variation>F</variation>
    <location>
        <position position="519"/>
    </location>
</feature>
<feature type="helix" evidence="10">
    <location>
        <begin position="221"/>
        <end position="226"/>
    </location>
</feature>
<feature type="strand" evidence="10">
    <location>
        <begin position="232"/>
        <end position="237"/>
    </location>
</feature>
<feature type="helix" evidence="10">
    <location>
        <begin position="241"/>
        <end position="248"/>
    </location>
</feature>
<feature type="helix" evidence="10">
    <location>
        <begin position="250"/>
        <end position="252"/>
    </location>
</feature>
<feature type="helix" evidence="10">
    <location>
        <begin position="253"/>
        <end position="262"/>
    </location>
</feature>
<feature type="strand" evidence="10">
    <location>
        <begin position="265"/>
        <end position="267"/>
    </location>
</feature>
<feature type="strand" evidence="10">
    <location>
        <begin position="276"/>
        <end position="282"/>
    </location>
</feature>
<feature type="helix" evidence="10">
    <location>
        <begin position="283"/>
        <end position="304"/>
    </location>
</feature>
<feature type="strand" evidence="11">
    <location>
        <begin position="327"/>
        <end position="332"/>
    </location>
</feature>
<feature type="helix" evidence="11">
    <location>
        <begin position="335"/>
        <end position="337"/>
    </location>
</feature>
<feature type="helix" evidence="11">
    <location>
        <begin position="338"/>
        <end position="342"/>
    </location>
</feature>
<feature type="helix" evidence="11">
    <location>
        <begin position="344"/>
        <end position="346"/>
    </location>
</feature>
<feature type="helix" evidence="11">
    <location>
        <begin position="347"/>
        <end position="356"/>
    </location>
</feature>
<feature type="strand" evidence="11">
    <location>
        <begin position="359"/>
        <end position="361"/>
    </location>
</feature>
<feature type="strand" evidence="12">
    <location>
        <begin position="365"/>
        <end position="367"/>
    </location>
</feature>
<feature type="strand" evidence="11">
    <location>
        <begin position="369"/>
        <end position="375"/>
    </location>
</feature>
<feature type="helix" evidence="11">
    <location>
        <begin position="377"/>
        <end position="395"/>
    </location>
</feature>
<feature type="turn" evidence="13">
    <location>
        <begin position="609"/>
        <end position="611"/>
    </location>
</feature>
<feature type="strand" evidence="13">
    <location>
        <begin position="612"/>
        <end position="615"/>
    </location>
</feature>
<feature type="strand" evidence="13">
    <location>
        <begin position="618"/>
        <end position="621"/>
    </location>
</feature>
<feature type="helix" evidence="13">
    <location>
        <begin position="630"/>
        <end position="638"/>
    </location>
</feature>
<feature type="strand" evidence="13">
    <location>
        <begin position="639"/>
        <end position="641"/>
    </location>
</feature>
<feature type="turn" evidence="13">
    <location>
        <begin position="645"/>
        <end position="647"/>
    </location>
</feature>
<feature type="strand" evidence="13">
    <location>
        <begin position="652"/>
        <end position="656"/>
    </location>
</feature>
<proteinExistence type="evidence at protein level"/>
<evidence type="ECO:0000255" key="1">
    <source>
        <dbReference type="PROSITE-ProRule" id="PRU00117"/>
    </source>
</evidence>
<evidence type="ECO:0000255" key="2">
    <source>
        <dbReference type="PROSITE-ProRule" id="PRU00175"/>
    </source>
</evidence>
<evidence type="ECO:0000256" key="3">
    <source>
        <dbReference type="SAM" id="MobiDB-lite"/>
    </source>
</evidence>
<evidence type="ECO:0000269" key="4">
    <source>
    </source>
</evidence>
<evidence type="ECO:0000269" key="5">
    <source>
    </source>
</evidence>
<evidence type="ECO:0000269" key="6">
    <source>
    </source>
</evidence>
<evidence type="ECO:0000269" key="7">
    <source>
    </source>
</evidence>
<evidence type="ECO:0000305" key="8"/>
<evidence type="ECO:0007744" key="9">
    <source>
    </source>
</evidence>
<evidence type="ECO:0007829" key="10">
    <source>
        <dbReference type="PDB" id="5WWW"/>
    </source>
</evidence>
<evidence type="ECO:0007829" key="11">
    <source>
        <dbReference type="PDB" id="5WWX"/>
    </source>
</evidence>
<evidence type="ECO:0007829" key="12">
    <source>
        <dbReference type="PDB" id="5WWZ"/>
    </source>
</evidence>
<evidence type="ECO:0007829" key="13">
    <source>
        <dbReference type="PDB" id="5ZI6"/>
    </source>
</evidence>
<dbReference type="EC" id="2.3.2.27"/>
<dbReference type="EMBL" id="AY950679">
    <property type="protein sequence ID" value="AAY34147.1"/>
    <property type="molecule type" value="mRNA"/>
</dbReference>
<dbReference type="EMBL" id="AC090330">
    <property type="status" value="NOT_ANNOTATED_CDS"/>
    <property type="molecule type" value="Genomic_DNA"/>
</dbReference>
<dbReference type="EMBL" id="BC041122">
    <property type="protein sequence ID" value="AAH41122.1"/>
    <property type="molecule type" value="mRNA"/>
</dbReference>
<dbReference type="EMBL" id="AF208855">
    <property type="protein sequence ID" value="AAF64269.1"/>
    <property type="status" value="ALT_SEQ"/>
    <property type="molecule type" value="mRNA"/>
</dbReference>
<dbReference type="CCDS" id="CCDS11951.2"/>
<dbReference type="RefSeq" id="NP_057710.3">
    <property type="nucleotide sequence ID" value="NM_016626.4"/>
</dbReference>
<dbReference type="PDB" id="5WWW">
    <property type="method" value="X-ray"/>
    <property type="resolution" value="1.80 A"/>
    <property type="chains" value="A=221-306"/>
</dbReference>
<dbReference type="PDB" id="5WWX">
    <property type="method" value="X-ray"/>
    <property type="resolution" value="2.00 A"/>
    <property type="chains" value="A=320-396"/>
</dbReference>
<dbReference type="PDB" id="5WWZ">
    <property type="method" value="X-ray"/>
    <property type="resolution" value="2.50 A"/>
    <property type="chains" value="A/B/C=320-396"/>
</dbReference>
<dbReference type="PDB" id="5ZI6">
    <property type="method" value="X-ray"/>
    <property type="resolution" value="2.20 A"/>
    <property type="chains" value="A/B/C/D/E/F/G/H=605-659"/>
</dbReference>
<dbReference type="PDBsum" id="5WWW"/>
<dbReference type="PDBsum" id="5WWX"/>
<dbReference type="PDBsum" id="5WWZ"/>
<dbReference type="PDBsum" id="5ZI6"/>
<dbReference type="SMR" id="Q5U5Q3"/>
<dbReference type="BioGRID" id="119471">
    <property type="interactions" value="85"/>
</dbReference>
<dbReference type="FunCoup" id="Q5U5Q3">
    <property type="interactions" value="2647"/>
</dbReference>
<dbReference type="IntAct" id="Q5U5Q3">
    <property type="interactions" value="96"/>
</dbReference>
<dbReference type="MINT" id="Q5U5Q3"/>
<dbReference type="STRING" id="9606.ENSP00000385610"/>
<dbReference type="iPTMnet" id="Q5U5Q3"/>
<dbReference type="PhosphoSitePlus" id="Q5U5Q3"/>
<dbReference type="BioMuta" id="MEX3C"/>
<dbReference type="DMDM" id="134047827"/>
<dbReference type="jPOST" id="Q5U5Q3"/>
<dbReference type="MassIVE" id="Q5U5Q3"/>
<dbReference type="PaxDb" id="9606-ENSP00000385610"/>
<dbReference type="PeptideAtlas" id="Q5U5Q3"/>
<dbReference type="ProteomicsDB" id="65230"/>
<dbReference type="Pumba" id="Q5U5Q3"/>
<dbReference type="Antibodypedia" id="22729">
    <property type="antibodies" value="139 antibodies from 30 providers"/>
</dbReference>
<dbReference type="DNASU" id="51320"/>
<dbReference type="Ensembl" id="ENST00000406189.4">
    <property type="protein sequence ID" value="ENSP00000385610.3"/>
    <property type="gene ID" value="ENSG00000176624.12"/>
</dbReference>
<dbReference type="GeneID" id="51320"/>
<dbReference type="KEGG" id="hsa:51320"/>
<dbReference type="MANE-Select" id="ENST00000406189.4">
    <property type="protein sequence ID" value="ENSP00000385610.3"/>
    <property type="RefSeq nucleotide sequence ID" value="NM_016626.5"/>
    <property type="RefSeq protein sequence ID" value="NP_057710.3"/>
</dbReference>
<dbReference type="UCSC" id="uc002lfc.5">
    <property type="organism name" value="human"/>
</dbReference>
<dbReference type="AGR" id="HGNC:28040"/>
<dbReference type="CTD" id="51320"/>
<dbReference type="DisGeNET" id="51320"/>
<dbReference type="GeneCards" id="MEX3C"/>
<dbReference type="HGNC" id="HGNC:28040">
    <property type="gene designation" value="MEX3C"/>
</dbReference>
<dbReference type="HPA" id="ENSG00000176624">
    <property type="expression patterns" value="Tissue enhanced (testis)"/>
</dbReference>
<dbReference type="MIM" id="611005">
    <property type="type" value="gene"/>
</dbReference>
<dbReference type="neXtProt" id="NX_Q5U5Q3"/>
<dbReference type="OpenTargets" id="ENSG00000176624"/>
<dbReference type="PharmGKB" id="PA162395821"/>
<dbReference type="VEuPathDB" id="HostDB:ENSG00000176624"/>
<dbReference type="eggNOG" id="KOG2113">
    <property type="taxonomic scope" value="Eukaryota"/>
</dbReference>
<dbReference type="GeneTree" id="ENSGT00940000160973"/>
<dbReference type="InParanoid" id="Q5U5Q3"/>
<dbReference type="OMA" id="GLPCNPN"/>
<dbReference type="OrthoDB" id="427410at2759"/>
<dbReference type="PAN-GO" id="Q5U5Q3">
    <property type="GO annotations" value="0 GO annotations based on evolutionary models"/>
</dbReference>
<dbReference type="PhylomeDB" id="Q5U5Q3"/>
<dbReference type="TreeFam" id="TF315107"/>
<dbReference type="BRENDA" id="2.3.2.27">
    <property type="organism ID" value="2681"/>
</dbReference>
<dbReference type="PathwayCommons" id="Q5U5Q3"/>
<dbReference type="Reactome" id="R-HSA-983168">
    <property type="pathway name" value="Antigen processing: Ubiquitination &amp; Proteasome degradation"/>
</dbReference>
<dbReference type="SignaLink" id="Q5U5Q3"/>
<dbReference type="SIGNOR" id="Q5U5Q3"/>
<dbReference type="BioGRID-ORCS" id="51320">
    <property type="hits" value="24 hits in 1129 CRISPR screens"/>
</dbReference>
<dbReference type="CD-CODE" id="1A18FFC4">
    <property type="entry name" value="Paraspeckle"/>
</dbReference>
<dbReference type="CD-CODE" id="DEE660B4">
    <property type="entry name" value="Stress granule"/>
</dbReference>
<dbReference type="ChiTaRS" id="MEX3C">
    <property type="organism name" value="human"/>
</dbReference>
<dbReference type="GenomeRNAi" id="51320"/>
<dbReference type="Pharos" id="Q5U5Q3">
    <property type="development level" value="Tbio"/>
</dbReference>
<dbReference type="PRO" id="PR:Q5U5Q3"/>
<dbReference type="Proteomes" id="UP000005640">
    <property type="component" value="Chromosome 18"/>
</dbReference>
<dbReference type="RNAct" id="Q5U5Q3">
    <property type="molecule type" value="protein"/>
</dbReference>
<dbReference type="Bgee" id="ENSG00000176624">
    <property type="expression patterns" value="Expressed in sperm and 198 other cell types or tissues"/>
</dbReference>
<dbReference type="ExpressionAtlas" id="Q5U5Q3">
    <property type="expression patterns" value="baseline and differential"/>
</dbReference>
<dbReference type="GO" id="GO:0005737">
    <property type="term" value="C:cytoplasm"/>
    <property type="evidence" value="ECO:0007669"/>
    <property type="project" value="UniProtKB-SubCell"/>
</dbReference>
<dbReference type="GO" id="GO:0005634">
    <property type="term" value="C:nucleus"/>
    <property type="evidence" value="ECO:0007669"/>
    <property type="project" value="UniProtKB-SubCell"/>
</dbReference>
<dbReference type="GO" id="GO:0003723">
    <property type="term" value="F:RNA binding"/>
    <property type="evidence" value="ECO:0000314"/>
    <property type="project" value="UniProtKB"/>
</dbReference>
<dbReference type="GO" id="GO:0061630">
    <property type="term" value="F:ubiquitin protein ligase activity"/>
    <property type="evidence" value="ECO:0000314"/>
    <property type="project" value="FlyBase"/>
</dbReference>
<dbReference type="GO" id="GO:0008270">
    <property type="term" value="F:zinc ion binding"/>
    <property type="evidence" value="ECO:0007669"/>
    <property type="project" value="UniProtKB-KW"/>
</dbReference>
<dbReference type="GO" id="GO:0003415">
    <property type="term" value="P:chondrocyte hypertrophy"/>
    <property type="evidence" value="ECO:0007669"/>
    <property type="project" value="Ensembl"/>
</dbReference>
<dbReference type="GO" id="GO:0097009">
    <property type="term" value="P:energy homeostasis"/>
    <property type="evidence" value="ECO:0007669"/>
    <property type="project" value="Ensembl"/>
</dbReference>
<dbReference type="GO" id="GO:0045598">
    <property type="term" value="P:regulation of fat cell differentiation"/>
    <property type="evidence" value="ECO:0007669"/>
    <property type="project" value="Ensembl"/>
</dbReference>
<dbReference type="CDD" id="cd22423">
    <property type="entry name" value="KH-I_MEX3_rpt1"/>
    <property type="match status" value="1"/>
</dbReference>
<dbReference type="CDD" id="cd22424">
    <property type="entry name" value="KH-I_MEX3_rpt2"/>
    <property type="match status" value="1"/>
</dbReference>
<dbReference type="CDD" id="cd16722">
    <property type="entry name" value="RING-HC_MEX3C"/>
    <property type="match status" value="1"/>
</dbReference>
<dbReference type="FunFam" id="3.30.1370.10:FF:000013">
    <property type="entry name" value="Mex-3 RNA-binding family member B"/>
    <property type="match status" value="1"/>
</dbReference>
<dbReference type="FunFam" id="3.30.40.10:FF:000090">
    <property type="entry name" value="Mex-3 RNA-binding family member C"/>
    <property type="match status" value="1"/>
</dbReference>
<dbReference type="FunFam" id="3.30.1370.10:FF:000012">
    <property type="entry name" value="Mex-3 RNA-binding family member D"/>
    <property type="match status" value="1"/>
</dbReference>
<dbReference type="Gene3D" id="3.30.1370.10">
    <property type="entry name" value="K Homology domain, type 1"/>
    <property type="match status" value="2"/>
</dbReference>
<dbReference type="Gene3D" id="3.30.40.10">
    <property type="entry name" value="Zinc/RING finger domain, C3HC4 (zinc finger)"/>
    <property type="match status" value="1"/>
</dbReference>
<dbReference type="InterPro" id="IPR047228">
    <property type="entry name" value="KH-I_MEX3_rpt1"/>
</dbReference>
<dbReference type="InterPro" id="IPR047226">
    <property type="entry name" value="KH-I_MEX3_rpt2"/>
</dbReference>
<dbReference type="InterPro" id="IPR004087">
    <property type="entry name" value="KH_dom"/>
</dbReference>
<dbReference type="InterPro" id="IPR004088">
    <property type="entry name" value="KH_dom_type_1"/>
</dbReference>
<dbReference type="InterPro" id="IPR036612">
    <property type="entry name" value="KH_dom_type_1_sf"/>
</dbReference>
<dbReference type="InterPro" id="IPR047227">
    <property type="entry name" value="MEX3"/>
</dbReference>
<dbReference type="InterPro" id="IPR001841">
    <property type="entry name" value="Znf_RING"/>
</dbReference>
<dbReference type="InterPro" id="IPR013083">
    <property type="entry name" value="Znf_RING/FYVE/PHD"/>
</dbReference>
<dbReference type="PANTHER" id="PTHR23285">
    <property type="entry name" value="RING FINGER AND KH DOMAIN CONTAINING PROTEIN 1"/>
    <property type="match status" value="1"/>
</dbReference>
<dbReference type="PANTHER" id="PTHR23285:SF8">
    <property type="entry name" value="RNA-BINDING E3 UBIQUITIN-PROTEIN LIGASE MEX3C"/>
    <property type="match status" value="1"/>
</dbReference>
<dbReference type="Pfam" id="PF00013">
    <property type="entry name" value="KH_1"/>
    <property type="match status" value="2"/>
</dbReference>
<dbReference type="Pfam" id="PF13920">
    <property type="entry name" value="zf-C3HC4_3"/>
    <property type="match status" value="1"/>
</dbReference>
<dbReference type="SMART" id="SM00322">
    <property type="entry name" value="KH"/>
    <property type="match status" value="2"/>
</dbReference>
<dbReference type="SMART" id="SM00184">
    <property type="entry name" value="RING"/>
    <property type="match status" value="1"/>
</dbReference>
<dbReference type="SUPFAM" id="SSF54791">
    <property type="entry name" value="Eukaryotic type KH-domain (KH-domain type I)"/>
    <property type="match status" value="2"/>
</dbReference>
<dbReference type="SUPFAM" id="SSF57850">
    <property type="entry name" value="RING/U-box"/>
    <property type="match status" value="1"/>
</dbReference>
<dbReference type="PROSITE" id="PS50084">
    <property type="entry name" value="KH_TYPE_1"/>
    <property type="match status" value="2"/>
</dbReference>
<dbReference type="PROSITE" id="PS50089">
    <property type="entry name" value="ZF_RING_2"/>
    <property type="match status" value="1"/>
</dbReference>
<gene>
    <name type="primary">MEX3C</name>
    <name type="synonym">RKHD2</name>
    <name type="synonym">RNF194</name>
    <name type="ORF">BM-013</name>
</gene>
<name>MEX3C_HUMAN</name>